<evidence type="ECO:0000255" key="1">
    <source>
        <dbReference type="HAMAP-Rule" id="MF_01321"/>
    </source>
</evidence>
<sequence length="1358" mass="151769">MAQTFTGRKRIRKFFGKIKEVAEMPNLIEVQKASYDQFLQIEEPKGGRDDDGLQAVFKSVFPISDFSGASMLEFVRYEFEPPKYDVDECRQRGMTFAAPLKVTLRLIVFDVDPETGAKSVKDIKEQDVYTGDIPLMTMNGTFIVNGTERVIVSQMHRSPGVFFDHDKGKTHSSGKLLFAARIIPYRGSWLDIEFDAKDIVFARIDRRRKIPVTSLLYALGLDNEEILSTFYEKIPFTREKGGWRMPFDPKRMKGYKAVADLIDADTGEVVLEAGKKLTVRAGRQLAEKGLKALKISDEEMIGQYIAEDLVDLTSGEIHAEAGEEITEKTLKLLEETGYNEIPVLDIDHVNTGAYIRNTLTADKNVTREDALFDIYRVMRPGEPPTLDSAQAMFHSLFFDSERYDLSAVGRVKMNMRLDLDCPDTVRVLRRDDILSVIRTLVELRDGKGEIDDIDHLGNRRVRSVGELMENQYRVGLLRMERAIKERMSSVDIDTVMPQDLINAKPVAAAVREFFGSSQLSQFMDQTNPLSEITHKRRLSALGPGGLTRERAGFEVRDVHPTHYGRICPIETPEGPNIGLINSLATFARVNKYGFIEAPYRRVVDSKVTDEVVYLSAMEEGKYYVAQANIPLDKDGRFEEDLIVCRHAGDVLLVAPDRVDFMDVSPKQLVSVAAALIPFLENDDANRALMGSNMQRQAVPLVRSQAPLVGTGMEAVVARDSGAAIAARRTGVIDQVDATRIVIRATEEADPSKSGVDIYRLMKFQRSNQSTCINQRPLVRVGDQVKKGDIIADGPSTELGELALGRNVLVAFMPWNGYNFEDSILLSENIAKEDVFTSIHIEEFEAMARDTKLGPEEITRDIPNVSEEALKNLDEAGIVYIGAEVRAGDILVGKITPKGESPMTPEEKLLRAIFGEKAADVRDTSLRLPPGTTGTIVEVRVFNRHGVDKDERALAIEREEIERLAKDRDDEQAILDRNVYGRLIEILDGKTAIAGPKGFRKETVVTREILTEYPRSQWWLFAVADDAIMAELEAIRAQYDDSKKRLEQRFLDKVEKLQRGDELPPGVMKMVKVFVAVKRKIQPGDKMAGRHGNKGVVSRIVPVEDMPFLEDGTNVDIVLNPLGVPSRMNVGQILETHLGWACAGLGRQVAAAMEAYYGKQDLKPLRDRLETIYGKDEIEQLKDGELPELGENLRKGVPMATPVFDGAHEADIEQQLEKAGLDASGQSTLYDGRTGEPFDRKVTVGYIYMLKLHHLVDDKIHARSIGPYSLVTQQPLGGKAQFGGQRFGEMEVWALEAYGAAYTLQEMLTVKSDDVAGRTKVYEAIVRGEDTFESGIPESFNVLVKEMRSLGLNVDLENS</sequence>
<keyword id="KW-0240">DNA-directed RNA polymerase</keyword>
<keyword id="KW-0548">Nucleotidyltransferase</keyword>
<keyword id="KW-1185">Reference proteome</keyword>
<keyword id="KW-0804">Transcription</keyword>
<keyword id="KW-0808">Transferase</keyword>
<name>RPOB_XANP2</name>
<feature type="chain" id="PRO_1000141751" description="DNA-directed RNA polymerase subunit beta">
    <location>
        <begin position="1"/>
        <end position="1358"/>
    </location>
</feature>
<comment type="function">
    <text evidence="1">DNA-dependent RNA polymerase catalyzes the transcription of DNA into RNA using the four ribonucleoside triphosphates as substrates.</text>
</comment>
<comment type="catalytic activity">
    <reaction evidence="1">
        <text>RNA(n) + a ribonucleoside 5'-triphosphate = RNA(n+1) + diphosphate</text>
        <dbReference type="Rhea" id="RHEA:21248"/>
        <dbReference type="Rhea" id="RHEA-COMP:14527"/>
        <dbReference type="Rhea" id="RHEA-COMP:17342"/>
        <dbReference type="ChEBI" id="CHEBI:33019"/>
        <dbReference type="ChEBI" id="CHEBI:61557"/>
        <dbReference type="ChEBI" id="CHEBI:140395"/>
        <dbReference type="EC" id="2.7.7.6"/>
    </reaction>
</comment>
<comment type="subunit">
    <text evidence="1">The RNAP catalytic core consists of 2 alpha, 1 beta, 1 beta' and 1 omega subunit. When a sigma factor is associated with the core the holoenzyme is formed, which can initiate transcription.</text>
</comment>
<comment type="similarity">
    <text evidence="1">Belongs to the RNA polymerase beta chain family.</text>
</comment>
<accession>A7IKQ0</accession>
<dbReference type="EC" id="2.7.7.6" evidence="1"/>
<dbReference type="EMBL" id="CP000781">
    <property type="protein sequence ID" value="ABS68593.1"/>
    <property type="molecule type" value="Genomic_DNA"/>
</dbReference>
<dbReference type="SMR" id="A7IKQ0"/>
<dbReference type="STRING" id="78245.Xaut_3364"/>
<dbReference type="KEGG" id="xau:Xaut_3364"/>
<dbReference type="eggNOG" id="COG0085">
    <property type="taxonomic scope" value="Bacteria"/>
</dbReference>
<dbReference type="HOGENOM" id="CLU_000524_4_0_5"/>
<dbReference type="OrthoDB" id="9803954at2"/>
<dbReference type="PhylomeDB" id="A7IKQ0"/>
<dbReference type="Proteomes" id="UP000002417">
    <property type="component" value="Chromosome"/>
</dbReference>
<dbReference type="GO" id="GO:0000428">
    <property type="term" value="C:DNA-directed RNA polymerase complex"/>
    <property type="evidence" value="ECO:0007669"/>
    <property type="project" value="UniProtKB-KW"/>
</dbReference>
<dbReference type="GO" id="GO:0003677">
    <property type="term" value="F:DNA binding"/>
    <property type="evidence" value="ECO:0007669"/>
    <property type="project" value="UniProtKB-UniRule"/>
</dbReference>
<dbReference type="GO" id="GO:0003899">
    <property type="term" value="F:DNA-directed RNA polymerase activity"/>
    <property type="evidence" value="ECO:0007669"/>
    <property type="project" value="UniProtKB-UniRule"/>
</dbReference>
<dbReference type="GO" id="GO:0032549">
    <property type="term" value="F:ribonucleoside binding"/>
    <property type="evidence" value="ECO:0007669"/>
    <property type="project" value="InterPro"/>
</dbReference>
<dbReference type="GO" id="GO:0006351">
    <property type="term" value="P:DNA-templated transcription"/>
    <property type="evidence" value="ECO:0007669"/>
    <property type="project" value="UniProtKB-UniRule"/>
</dbReference>
<dbReference type="CDD" id="cd00653">
    <property type="entry name" value="RNA_pol_B_RPB2"/>
    <property type="match status" value="1"/>
</dbReference>
<dbReference type="FunFam" id="2.40.50.100:FF:000006">
    <property type="entry name" value="DNA-directed RNA polymerase subunit beta"/>
    <property type="match status" value="1"/>
</dbReference>
<dbReference type="FunFam" id="3.90.1800.10:FF:000001">
    <property type="entry name" value="DNA-directed RNA polymerase subunit beta"/>
    <property type="match status" value="1"/>
</dbReference>
<dbReference type="Gene3D" id="2.40.50.100">
    <property type="match status" value="1"/>
</dbReference>
<dbReference type="Gene3D" id="2.40.50.150">
    <property type="match status" value="1"/>
</dbReference>
<dbReference type="Gene3D" id="3.90.1100.10">
    <property type="match status" value="2"/>
</dbReference>
<dbReference type="Gene3D" id="2.30.150.10">
    <property type="entry name" value="DNA-directed RNA polymerase, beta subunit, external 1 domain"/>
    <property type="match status" value="1"/>
</dbReference>
<dbReference type="Gene3D" id="2.40.270.10">
    <property type="entry name" value="DNA-directed RNA polymerase, subunit 2, domain 6"/>
    <property type="match status" value="2"/>
</dbReference>
<dbReference type="Gene3D" id="3.90.1800.10">
    <property type="entry name" value="RNA polymerase alpha subunit dimerisation domain"/>
    <property type="match status" value="1"/>
</dbReference>
<dbReference type="Gene3D" id="3.90.1110.10">
    <property type="entry name" value="RNA polymerase Rpb2, domain 2"/>
    <property type="match status" value="2"/>
</dbReference>
<dbReference type="HAMAP" id="MF_01321">
    <property type="entry name" value="RNApol_bact_RpoB"/>
    <property type="match status" value="1"/>
</dbReference>
<dbReference type="InterPro" id="IPR042107">
    <property type="entry name" value="DNA-dir_RNA_pol_bsu_ext_1_sf"/>
</dbReference>
<dbReference type="InterPro" id="IPR019462">
    <property type="entry name" value="DNA-dir_RNA_pol_bsu_external_1"/>
</dbReference>
<dbReference type="InterPro" id="IPR015712">
    <property type="entry name" value="DNA-dir_RNA_pol_su2"/>
</dbReference>
<dbReference type="InterPro" id="IPR007120">
    <property type="entry name" value="DNA-dir_RNAP_su2_dom"/>
</dbReference>
<dbReference type="InterPro" id="IPR037033">
    <property type="entry name" value="DNA-dir_RNAP_su2_hyb_sf"/>
</dbReference>
<dbReference type="InterPro" id="IPR010243">
    <property type="entry name" value="RNA_pol_bsu_bac"/>
</dbReference>
<dbReference type="InterPro" id="IPR007121">
    <property type="entry name" value="RNA_pol_bsu_CS"/>
</dbReference>
<dbReference type="InterPro" id="IPR007644">
    <property type="entry name" value="RNA_pol_bsu_protrusion"/>
</dbReference>
<dbReference type="InterPro" id="IPR007642">
    <property type="entry name" value="RNA_pol_Rpb2_2"/>
</dbReference>
<dbReference type="InterPro" id="IPR037034">
    <property type="entry name" value="RNA_pol_Rpb2_2_sf"/>
</dbReference>
<dbReference type="InterPro" id="IPR007645">
    <property type="entry name" value="RNA_pol_Rpb2_3"/>
</dbReference>
<dbReference type="InterPro" id="IPR007641">
    <property type="entry name" value="RNA_pol_Rpb2_7"/>
</dbReference>
<dbReference type="InterPro" id="IPR014724">
    <property type="entry name" value="RNA_pol_RPB2_OB-fold"/>
</dbReference>
<dbReference type="NCBIfam" id="NF001616">
    <property type="entry name" value="PRK00405.1"/>
    <property type="match status" value="1"/>
</dbReference>
<dbReference type="NCBIfam" id="TIGR02013">
    <property type="entry name" value="rpoB"/>
    <property type="match status" value="1"/>
</dbReference>
<dbReference type="PANTHER" id="PTHR20856">
    <property type="entry name" value="DNA-DIRECTED RNA POLYMERASE I SUBUNIT 2"/>
    <property type="match status" value="1"/>
</dbReference>
<dbReference type="Pfam" id="PF04563">
    <property type="entry name" value="RNA_pol_Rpb2_1"/>
    <property type="match status" value="1"/>
</dbReference>
<dbReference type="Pfam" id="PF04561">
    <property type="entry name" value="RNA_pol_Rpb2_2"/>
    <property type="match status" value="2"/>
</dbReference>
<dbReference type="Pfam" id="PF04565">
    <property type="entry name" value="RNA_pol_Rpb2_3"/>
    <property type="match status" value="1"/>
</dbReference>
<dbReference type="Pfam" id="PF10385">
    <property type="entry name" value="RNA_pol_Rpb2_45"/>
    <property type="match status" value="1"/>
</dbReference>
<dbReference type="Pfam" id="PF00562">
    <property type="entry name" value="RNA_pol_Rpb2_6"/>
    <property type="match status" value="1"/>
</dbReference>
<dbReference type="Pfam" id="PF04560">
    <property type="entry name" value="RNA_pol_Rpb2_7"/>
    <property type="match status" value="1"/>
</dbReference>
<dbReference type="SUPFAM" id="SSF64484">
    <property type="entry name" value="beta and beta-prime subunits of DNA dependent RNA-polymerase"/>
    <property type="match status" value="1"/>
</dbReference>
<dbReference type="PROSITE" id="PS01166">
    <property type="entry name" value="RNA_POL_BETA"/>
    <property type="match status" value="1"/>
</dbReference>
<proteinExistence type="inferred from homology"/>
<gene>
    <name evidence="1" type="primary">rpoB</name>
    <name type="ordered locus">Xaut_3364</name>
</gene>
<protein>
    <recommendedName>
        <fullName evidence="1">DNA-directed RNA polymerase subunit beta</fullName>
        <shortName evidence="1">RNAP subunit beta</shortName>
        <ecNumber evidence="1">2.7.7.6</ecNumber>
    </recommendedName>
    <alternativeName>
        <fullName evidence="1">RNA polymerase subunit beta</fullName>
    </alternativeName>
    <alternativeName>
        <fullName evidence="1">Transcriptase subunit beta</fullName>
    </alternativeName>
</protein>
<reference key="1">
    <citation type="submission" date="2007-07" db="EMBL/GenBank/DDBJ databases">
        <title>Complete sequence of chromosome of Xanthobacter autotrophicus Py2.</title>
        <authorList>
            <consortium name="US DOE Joint Genome Institute"/>
            <person name="Copeland A."/>
            <person name="Lucas S."/>
            <person name="Lapidus A."/>
            <person name="Barry K."/>
            <person name="Glavina del Rio T."/>
            <person name="Hammon N."/>
            <person name="Israni S."/>
            <person name="Dalin E."/>
            <person name="Tice H."/>
            <person name="Pitluck S."/>
            <person name="Sims D."/>
            <person name="Brettin T."/>
            <person name="Bruce D."/>
            <person name="Detter J.C."/>
            <person name="Han C."/>
            <person name="Tapia R."/>
            <person name="Brainard J."/>
            <person name="Schmutz J."/>
            <person name="Larimer F."/>
            <person name="Land M."/>
            <person name="Hauser L."/>
            <person name="Kyrpides N."/>
            <person name="Kim E."/>
            <person name="Ensigns S.A."/>
            <person name="Richardson P."/>
        </authorList>
    </citation>
    <scope>NUCLEOTIDE SEQUENCE [LARGE SCALE GENOMIC DNA]</scope>
    <source>
        <strain>ATCC BAA-1158 / Py2</strain>
    </source>
</reference>
<organism>
    <name type="scientific">Xanthobacter autotrophicus (strain ATCC BAA-1158 / Py2)</name>
    <dbReference type="NCBI Taxonomy" id="78245"/>
    <lineage>
        <taxon>Bacteria</taxon>
        <taxon>Pseudomonadati</taxon>
        <taxon>Pseudomonadota</taxon>
        <taxon>Alphaproteobacteria</taxon>
        <taxon>Hyphomicrobiales</taxon>
        <taxon>Xanthobacteraceae</taxon>
        <taxon>Xanthobacter</taxon>
    </lineage>
</organism>